<gene>
    <name evidence="9" type="primary">AZS22-16</name>
    <name evidence="4" type="synonym">AZ22Z1</name>
    <name type="synonym">FL2</name>
    <name evidence="12" type="ORF">ZEAMMB73_085745</name>
</gene>
<reference key="1">
    <citation type="journal article" date="1982" name="J. Biol. Chem.">
        <title>Analysis of sequence microheterogeneity among zein messenger RNAs.</title>
        <authorList>
            <person name="Marks M.D."/>
            <person name="Larkins B.A."/>
        </authorList>
    </citation>
    <scope>NUCLEOTIDE SEQUENCE [MRNA]</scope>
</reference>
<reference key="2">
    <citation type="journal article" date="1985" name="J. Biol. Chem.">
        <title>Nucleotide sequence analysis of zein mRNAs from maize endosperm.</title>
        <authorList>
            <person name="Marks M.D."/>
            <person name="Lindell J.S."/>
            <person name="Larkins B.A."/>
        </authorList>
    </citation>
    <scope>NUCLEOTIDE SEQUENCE [MRNA]</scope>
</reference>
<reference evidence="9" key="3">
    <citation type="journal article" date="2001" name="Genome Res.">
        <title>Sequence, regulation, and evolution of the maize 22-kD alpha zein gene family.</title>
        <authorList>
            <person name="Song R."/>
            <person name="Llaca V."/>
            <person name="Linton E."/>
            <person name="Messing J."/>
        </authorList>
    </citation>
    <scope>NUCLEOTIDE SEQUENCE [GENOMIC DNA]</scope>
    <scope>GENE FAMILY</scope>
    <scope>NOMENCLATURE</scope>
</reference>
<reference evidence="12 13" key="4">
    <citation type="journal article" date="2009" name="Science">
        <title>The B73 maize genome: complexity, diversity, and dynamics.</title>
        <authorList>
            <person name="Schnable P.S."/>
            <person name="Ware D."/>
            <person name="Fulton R.S."/>
            <person name="Stein J.C."/>
            <person name="Wei F."/>
            <person name="Pasternak S."/>
            <person name="Liang C."/>
            <person name="Zhang J."/>
            <person name="Fulton L."/>
            <person name="Graves T.A."/>
            <person name="Minx P."/>
            <person name="Reily A.D."/>
            <person name="Courtney L."/>
            <person name="Kruchowski S.S."/>
            <person name="Tomlinson C."/>
            <person name="Strong C."/>
            <person name="Delehaunty K."/>
            <person name="Fronick C."/>
            <person name="Courtney B."/>
            <person name="Rock S.M."/>
            <person name="Belter E."/>
            <person name="Du F."/>
            <person name="Kim K."/>
            <person name="Abbott R.M."/>
            <person name="Cotton M."/>
            <person name="Levy A."/>
            <person name="Marchetto P."/>
            <person name="Ochoa K."/>
            <person name="Jackson S.M."/>
            <person name="Gillam B."/>
            <person name="Chen W."/>
            <person name="Yan L."/>
            <person name="Higginbotham J."/>
            <person name="Cardenas M."/>
            <person name="Waligorski J."/>
            <person name="Applebaum E."/>
            <person name="Phelps L."/>
            <person name="Falcone J."/>
            <person name="Kanchi K."/>
            <person name="Thane T."/>
            <person name="Scimone A."/>
            <person name="Thane N."/>
            <person name="Henke J."/>
            <person name="Wang T."/>
            <person name="Ruppert J."/>
            <person name="Shah N."/>
            <person name="Rotter K."/>
            <person name="Hodges J."/>
            <person name="Ingenthron E."/>
            <person name="Cordes M."/>
            <person name="Kohlberg S."/>
            <person name="Sgro J."/>
            <person name="Delgado B."/>
            <person name="Mead K."/>
            <person name="Chinwalla A."/>
            <person name="Leonard S."/>
            <person name="Crouse K."/>
            <person name="Collura K."/>
            <person name="Kudrna D."/>
            <person name="Currie J."/>
            <person name="He R."/>
            <person name="Angelova A."/>
            <person name="Rajasekar S."/>
            <person name="Mueller T."/>
            <person name="Lomeli R."/>
            <person name="Scara G."/>
            <person name="Ko A."/>
            <person name="Delaney K."/>
            <person name="Wissotski M."/>
            <person name="Lopez G."/>
            <person name="Campos D."/>
            <person name="Braidotti M."/>
            <person name="Ashley E."/>
            <person name="Golser W."/>
            <person name="Kim H."/>
            <person name="Lee S."/>
            <person name="Lin J."/>
            <person name="Dujmic Z."/>
            <person name="Kim W."/>
            <person name="Talag J."/>
            <person name="Zuccolo A."/>
            <person name="Fan C."/>
            <person name="Sebastian A."/>
            <person name="Kramer M."/>
            <person name="Spiegel L."/>
            <person name="Nascimento L."/>
            <person name="Zutavern T."/>
            <person name="Miller B."/>
            <person name="Ambroise C."/>
            <person name="Muller S."/>
            <person name="Spooner W."/>
            <person name="Narechania A."/>
            <person name="Ren L."/>
            <person name="Wei S."/>
            <person name="Kumari S."/>
            <person name="Faga B."/>
            <person name="Levy M.J."/>
            <person name="McMahan L."/>
            <person name="Van Buren P."/>
            <person name="Vaughn M.W."/>
            <person name="Ying K."/>
            <person name="Yeh C.-T."/>
            <person name="Emrich S.J."/>
            <person name="Jia Y."/>
            <person name="Kalyanaraman A."/>
            <person name="Hsia A.-P."/>
            <person name="Barbazuk W.B."/>
            <person name="Baucom R.S."/>
            <person name="Brutnell T.P."/>
            <person name="Carpita N.C."/>
            <person name="Chaparro C."/>
            <person name="Chia J.-M."/>
            <person name="Deragon J.-M."/>
            <person name="Estill J.C."/>
            <person name="Fu Y."/>
            <person name="Jeddeloh J.A."/>
            <person name="Han Y."/>
            <person name="Lee H."/>
            <person name="Li P."/>
            <person name="Lisch D.R."/>
            <person name="Liu S."/>
            <person name="Liu Z."/>
            <person name="Nagel D.H."/>
            <person name="McCann M.C."/>
            <person name="SanMiguel P."/>
            <person name="Myers A.M."/>
            <person name="Nettleton D."/>
            <person name="Nguyen J."/>
            <person name="Penning B.W."/>
            <person name="Ponnala L."/>
            <person name="Schneider K.L."/>
            <person name="Schwartz D.C."/>
            <person name="Sharma A."/>
            <person name="Soderlund C."/>
            <person name="Springer N.M."/>
            <person name="Sun Q."/>
            <person name="Wang H."/>
            <person name="Waterman M."/>
            <person name="Westerman R."/>
            <person name="Wolfgruber T.K."/>
            <person name="Yang L."/>
            <person name="Yu Y."/>
            <person name="Zhang L."/>
            <person name="Zhou S."/>
            <person name="Zhu Q."/>
            <person name="Bennetzen J.L."/>
            <person name="Dawe R.K."/>
            <person name="Jiang J."/>
            <person name="Jiang N."/>
            <person name="Presting G.G."/>
            <person name="Wessler S.R."/>
            <person name="Aluru S."/>
            <person name="Martienssen R.A."/>
            <person name="Clifton S.W."/>
            <person name="McCombie W.R."/>
            <person name="Wing R.A."/>
            <person name="Wilson R.K."/>
        </authorList>
    </citation>
    <scope>NUCLEOTIDE SEQUENCE [LARGE SCALE GENOMIC DNA]</scope>
    <source>
        <strain>cv. B73</strain>
    </source>
</reference>
<reference evidence="10" key="5">
    <citation type="journal article" date="2001" name="Plant Cell">
        <title>Genomics analysis of genes expressed in maize endosperm identifies novel seed proteins and clarifies patterns of zein gene expression.</title>
        <authorList>
            <person name="Woo Y.M."/>
            <person name="Hu D.W."/>
            <person name="Larkins B.A."/>
            <person name="Jung R."/>
        </authorList>
    </citation>
    <scope>NUCLEOTIDE SEQUENCE [LARGE SCALE MRNA]</scope>
    <source>
        <tissue>Endosperm</tissue>
    </source>
</reference>
<reference evidence="11" key="6">
    <citation type="journal article" date="2009" name="Plant Mol. Biol.">
        <title>Insights into corn genes derived from large-scale cDNA sequencing.</title>
        <authorList>
            <person name="Alexandrov N.N."/>
            <person name="Brover V.V."/>
            <person name="Freidin S."/>
            <person name="Troukhan M.E."/>
            <person name="Tatarinova T.V."/>
            <person name="Zhang H."/>
            <person name="Swaller T.J."/>
            <person name="Lu Y.-P."/>
            <person name="Bouck J."/>
            <person name="Flavell R.B."/>
            <person name="Feldmann K.A."/>
        </authorList>
    </citation>
    <scope>NUCLEOTIDE SEQUENCE [LARGE SCALE MRNA]</scope>
</reference>
<reference key="7">
    <citation type="journal article" date="1985" name="J. Biol. Chem.">
        <title>Quantitative analysis of the accumulation of Zein mRNA during maize endosperm development.</title>
        <authorList>
            <person name="Marks M.D."/>
            <person name="Lindell J.S."/>
            <person name="Larkins B.A."/>
        </authorList>
    </citation>
    <scope>TISSUE SPECIFICITY</scope>
    <scope>DEVELOPMENTAL STAGE</scope>
</reference>
<evidence type="ECO:0000250" key="1">
    <source>
        <dbReference type="UniProtKB" id="P04698"/>
    </source>
</evidence>
<evidence type="ECO:0000250" key="2">
    <source>
        <dbReference type="UniProtKB" id="Q41896"/>
    </source>
</evidence>
<evidence type="ECO:0000269" key="3">
    <source>
    </source>
</evidence>
<evidence type="ECO:0000303" key="4">
    <source>
    </source>
</evidence>
<evidence type="ECO:0000303" key="5">
    <source>
    </source>
</evidence>
<evidence type="ECO:0000303" key="6">
    <source>
    </source>
</evidence>
<evidence type="ECO:0000305" key="7"/>
<evidence type="ECO:0000305" key="8">
    <source>
    </source>
</evidence>
<evidence type="ECO:0000312" key="9">
    <source>
        <dbReference type="EMBL" id="AAD09015.1"/>
    </source>
</evidence>
<evidence type="ECO:0000312" key="10">
    <source>
        <dbReference type="EMBL" id="AAL16989.1"/>
    </source>
</evidence>
<evidence type="ECO:0000312" key="11">
    <source>
        <dbReference type="EMBL" id="ACG24580.1"/>
    </source>
</evidence>
<evidence type="ECO:0000312" key="12">
    <source>
        <dbReference type="EMBL" id="AFW60837.1"/>
    </source>
</evidence>
<evidence type="ECO:0000312" key="13">
    <source>
        <dbReference type="Proteomes" id="UP000007305"/>
    </source>
</evidence>
<feature type="signal peptide">
    <location>
        <begin position="1"/>
        <end position="21"/>
    </location>
</feature>
<feature type="chain" id="PRO_0000041626" description="22 kDa alpha-zein 16">
    <location>
        <begin position="22"/>
        <end position="263"/>
    </location>
</feature>
<feature type="sequence conflict" description="In Ref. 1 and 2; CAA24725." evidence="7" ref="1 2">
    <original>V</original>
    <variation>M</variation>
    <location>
        <position position="104"/>
    </location>
</feature>
<sequence length="263" mass="28452">MATKILALLALLALLVSATNAFIIPQCSLAPSASIPQFLPPVTSMGFEHPAVQAYRLQLALAASALQQPIAQLQQQSLAHLTLQTIATQQQQQQFLPSLSHLAVVNPVTYLQQQLLASNPLALANVAAYQQQQQLQQFMPVLSQLAMVNPAVYLQLLSSSPLAVGNAPTYLQQQLLQQIVPALTQLAVANPAAYLQQLLPFNQLAVSNSAAYLQQRQQLLNPLAVANPLVATFLQQQQQLLPYNQFSLMNPALQQPIVGGAIF</sequence>
<accession>P04700</accession>
<accession>Q9SBC4</accession>
<name>ZEAX_MAIZE</name>
<dbReference type="EMBL" id="V01478">
    <property type="protein sequence ID" value="CAA24725.1"/>
    <property type="molecule type" value="mRNA"/>
</dbReference>
<dbReference type="EMBL" id="AF090446">
    <property type="protein sequence ID" value="AAD09015.1"/>
    <property type="molecule type" value="Genomic_DNA"/>
</dbReference>
<dbReference type="EMBL" id="CM000780">
    <property type="protein sequence ID" value="AFW60837.1"/>
    <property type="molecule type" value="Genomic_DNA"/>
</dbReference>
<dbReference type="EMBL" id="AF371274">
    <property type="protein sequence ID" value="AAL16989.1"/>
    <property type="molecule type" value="mRNA"/>
</dbReference>
<dbReference type="EMBL" id="EU953295">
    <property type="protein sequence ID" value="ACG25413.1"/>
    <property type="molecule type" value="mRNA"/>
</dbReference>
<dbReference type="EMBL" id="EU952462">
    <property type="protein sequence ID" value="ACG24580.1"/>
    <property type="molecule type" value="mRNA"/>
</dbReference>
<dbReference type="PIR" id="A26564">
    <property type="entry name" value="ZIZM21"/>
</dbReference>
<dbReference type="RefSeq" id="NP_001105057.1">
    <property type="nucleotide sequence ID" value="NM_001111587.1"/>
</dbReference>
<dbReference type="RefSeq" id="NP_001106232.1">
    <property type="nucleotide sequence ID" value="NM_001112761.1"/>
</dbReference>
<dbReference type="STRING" id="4577.P04700"/>
<dbReference type="PaxDb" id="4577-GRMZM2G397687_P01"/>
<dbReference type="EnsemblPlants" id="Zm00001eb170070_T001">
    <property type="protein sequence ID" value="Zm00001eb170070_P001"/>
    <property type="gene ID" value="Zm00001eb170070"/>
</dbReference>
<dbReference type="GeneID" id="541924"/>
<dbReference type="Gramene" id="Zm00001eb170070_T001">
    <property type="protein sequence ID" value="Zm00001eb170070_P001"/>
    <property type="gene ID" value="Zm00001eb170070"/>
</dbReference>
<dbReference type="KEGG" id="zma:541924"/>
<dbReference type="MaizeGDB" id="58096"/>
<dbReference type="eggNOG" id="ENOG502R48M">
    <property type="taxonomic scope" value="Eukaryota"/>
</dbReference>
<dbReference type="InParanoid" id="P04700"/>
<dbReference type="OMA" id="LQQFMPV"/>
<dbReference type="OrthoDB" id="688966at2759"/>
<dbReference type="Proteomes" id="UP000007305">
    <property type="component" value="Chromosome 4"/>
</dbReference>
<dbReference type="ExpressionAtlas" id="P04700">
    <property type="expression patterns" value="baseline and differential"/>
</dbReference>
<dbReference type="GO" id="GO:0045735">
    <property type="term" value="F:nutrient reservoir activity"/>
    <property type="evidence" value="ECO:0007669"/>
    <property type="project" value="UniProtKB-KW"/>
</dbReference>
<dbReference type="InterPro" id="IPR051529">
    <property type="entry name" value="Seed_Storage_Prolamin"/>
</dbReference>
<dbReference type="InterPro" id="IPR002530">
    <property type="entry name" value="Zein"/>
</dbReference>
<dbReference type="PANTHER" id="PTHR48199">
    <property type="entry name" value="ALPHA KAFIRIN"/>
    <property type="match status" value="1"/>
</dbReference>
<dbReference type="PANTHER" id="PTHR48199:SF1">
    <property type="entry name" value="ALPHA KAFIRIN"/>
    <property type="match status" value="1"/>
</dbReference>
<dbReference type="Pfam" id="PF01559">
    <property type="entry name" value="Zein"/>
    <property type="match status" value="1"/>
</dbReference>
<proteinExistence type="evidence at transcript level"/>
<protein>
    <recommendedName>
        <fullName evidence="5">22 kDa alpha-zein 16</fullName>
    </recommendedName>
    <alternativeName>
        <fullName evidence="9">22 kDa alpha-zein protein 21</fullName>
    </alternativeName>
    <alternativeName>
        <fullName evidence="6">22 kDa zein PZ22.1/22A1</fullName>
    </alternativeName>
    <alternativeName>
        <fullName evidence="4">22kD alpha-zein 1</fullName>
    </alternativeName>
    <alternativeName>
        <fullName>Protein FLOURY 2</fullName>
    </alternativeName>
    <alternativeName>
        <fullName evidence="6">Zein-alpha PZ22.1/22A1</fullName>
    </alternativeName>
</protein>
<comment type="function">
    <text evidence="8">Zeins are major seed storage proteins.</text>
</comment>
<comment type="tissue specificity">
    <text evidence="3">Expressed in developing endosperm.</text>
</comment>
<comment type="developmental stage">
    <text evidence="3">Maximum expression between 18 and 28 days after pollination.</text>
</comment>
<comment type="miscellaneous">
    <text evidence="7">The alpha zeins of 19 kDa and 22 kDa account for 70% of the total zein fraction. They are encoded by a large multigene family.</text>
</comment>
<comment type="miscellaneous">
    <text evidence="1">Structurally, 22K and 19K zeins are composed of nine adjacent, topologically antiparallel helices clustered within a distorted cylinder.</text>
</comment>
<comment type="miscellaneous">
    <text evidence="3">Not expressed in opaque-2 mutants.</text>
</comment>
<comment type="miscellaneous">
    <text evidence="2">The floury-2 (fl2) mutation is associated with the synthesis of a novel 24 kDa alpha-zein storage protein and an altered protein body morphology (AC Q41896). The 24 kDa protein is expressed as a 22 kDa alpha-zein 16 with an uncleaved signal peptide, resulting in an enhanced lysine content of the grain and a soft texture of the endosperm.</text>
</comment>
<comment type="similarity">
    <text evidence="7">Belongs to the zein family.</text>
</comment>
<keyword id="KW-1185">Reference proteome</keyword>
<keyword id="KW-0677">Repeat</keyword>
<keyword id="KW-0708">Seed storage protein</keyword>
<keyword id="KW-0732">Signal</keyword>
<keyword id="KW-0758">Storage protein</keyword>
<organism>
    <name type="scientific">Zea mays</name>
    <name type="common">Maize</name>
    <dbReference type="NCBI Taxonomy" id="4577"/>
    <lineage>
        <taxon>Eukaryota</taxon>
        <taxon>Viridiplantae</taxon>
        <taxon>Streptophyta</taxon>
        <taxon>Embryophyta</taxon>
        <taxon>Tracheophyta</taxon>
        <taxon>Spermatophyta</taxon>
        <taxon>Magnoliopsida</taxon>
        <taxon>Liliopsida</taxon>
        <taxon>Poales</taxon>
        <taxon>Poaceae</taxon>
        <taxon>PACMAD clade</taxon>
        <taxon>Panicoideae</taxon>
        <taxon>Andropogonodae</taxon>
        <taxon>Andropogoneae</taxon>
        <taxon>Tripsacinae</taxon>
        <taxon>Zea</taxon>
    </lineage>
</organism>